<comment type="function">
    <text evidence="1">One of the primary rRNA binding proteins, it binds specifically to the 5'-end of 16S ribosomal RNA.</text>
</comment>
<comment type="subunit">
    <text evidence="1">Part of the 30S ribosomal subunit.</text>
</comment>
<comment type="similarity">
    <text evidence="1">Belongs to the universal ribosomal protein uS17 family.</text>
</comment>
<reference key="1">
    <citation type="journal article" date="2011" name="Stand. Genomic Sci.">
        <title>Complete genome sequence of Rhodospirillum rubrum type strain (S1).</title>
        <authorList>
            <person name="Munk A.C."/>
            <person name="Copeland A."/>
            <person name="Lucas S."/>
            <person name="Lapidus A."/>
            <person name="Del Rio T.G."/>
            <person name="Barry K."/>
            <person name="Detter J.C."/>
            <person name="Hammon N."/>
            <person name="Israni S."/>
            <person name="Pitluck S."/>
            <person name="Brettin T."/>
            <person name="Bruce D."/>
            <person name="Han C."/>
            <person name="Tapia R."/>
            <person name="Gilna P."/>
            <person name="Schmutz J."/>
            <person name="Larimer F."/>
            <person name="Land M."/>
            <person name="Kyrpides N.C."/>
            <person name="Mavromatis K."/>
            <person name="Richardson P."/>
            <person name="Rohde M."/>
            <person name="Goeker M."/>
            <person name="Klenk H.P."/>
            <person name="Zhang Y."/>
            <person name="Roberts G.P."/>
            <person name="Reslewic S."/>
            <person name="Schwartz D.C."/>
        </authorList>
    </citation>
    <scope>NUCLEOTIDE SEQUENCE [LARGE SCALE GENOMIC DNA]</scope>
    <source>
        <strain>ATCC 11170 / ATH 1.1.1 / DSM 467 / LMG 4362 / NCIMB 8255 / S1</strain>
    </source>
</reference>
<evidence type="ECO:0000255" key="1">
    <source>
        <dbReference type="HAMAP-Rule" id="MF_01345"/>
    </source>
</evidence>
<evidence type="ECO:0000305" key="2"/>
<organism>
    <name type="scientific">Rhodospirillum rubrum (strain ATCC 11170 / ATH 1.1.1 / DSM 467 / LMG 4362 / NCIMB 8255 / S1)</name>
    <dbReference type="NCBI Taxonomy" id="269796"/>
    <lineage>
        <taxon>Bacteria</taxon>
        <taxon>Pseudomonadati</taxon>
        <taxon>Pseudomonadota</taxon>
        <taxon>Alphaproteobacteria</taxon>
        <taxon>Rhodospirillales</taxon>
        <taxon>Rhodospirillaceae</taxon>
        <taxon>Rhodospirillum</taxon>
    </lineage>
</organism>
<feature type="chain" id="PRO_0000233556" description="Small ribosomal subunit protein uS17">
    <location>
        <begin position="1"/>
        <end position="79"/>
    </location>
</feature>
<gene>
    <name evidence="1" type="primary">rpsQ</name>
    <name type="ordered locus">Rru_A2679</name>
</gene>
<keyword id="KW-1185">Reference proteome</keyword>
<keyword id="KW-0687">Ribonucleoprotein</keyword>
<keyword id="KW-0689">Ribosomal protein</keyword>
<keyword id="KW-0694">RNA-binding</keyword>
<keyword id="KW-0699">rRNA-binding</keyword>
<protein>
    <recommendedName>
        <fullName evidence="1">Small ribosomal subunit protein uS17</fullName>
    </recommendedName>
    <alternativeName>
        <fullName evidence="2">30S ribosomal protein S17</fullName>
    </alternativeName>
</protein>
<accession>Q2RQW9</accession>
<dbReference type="EMBL" id="CP000230">
    <property type="protein sequence ID" value="ABC23476.1"/>
    <property type="molecule type" value="Genomic_DNA"/>
</dbReference>
<dbReference type="RefSeq" id="WP_011390429.1">
    <property type="nucleotide sequence ID" value="NC_007643.1"/>
</dbReference>
<dbReference type="RefSeq" id="YP_427763.1">
    <property type="nucleotide sequence ID" value="NC_007643.1"/>
</dbReference>
<dbReference type="SMR" id="Q2RQW9"/>
<dbReference type="STRING" id="269796.Rru_A2679"/>
<dbReference type="EnsemblBacteria" id="ABC23476">
    <property type="protein sequence ID" value="ABC23476"/>
    <property type="gene ID" value="Rru_A2679"/>
</dbReference>
<dbReference type="KEGG" id="rru:Rru_A2679"/>
<dbReference type="PATRIC" id="fig|269796.9.peg.2786"/>
<dbReference type="eggNOG" id="COG0186">
    <property type="taxonomic scope" value="Bacteria"/>
</dbReference>
<dbReference type="HOGENOM" id="CLU_073626_1_1_5"/>
<dbReference type="PhylomeDB" id="Q2RQW9"/>
<dbReference type="Proteomes" id="UP000001929">
    <property type="component" value="Chromosome"/>
</dbReference>
<dbReference type="GO" id="GO:0022627">
    <property type="term" value="C:cytosolic small ribosomal subunit"/>
    <property type="evidence" value="ECO:0007669"/>
    <property type="project" value="TreeGrafter"/>
</dbReference>
<dbReference type="GO" id="GO:0019843">
    <property type="term" value="F:rRNA binding"/>
    <property type="evidence" value="ECO:0007669"/>
    <property type="project" value="UniProtKB-UniRule"/>
</dbReference>
<dbReference type="GO" id="GO:0003735">
    <property type="term" value="F:structural constituent of ribosome"/>
    <property type="evidence" value="ECO:0007669"/>
    <property type="project" value="InterPro"/>
</dbReference>
<dbReference type="GO" id="GO:0006412">
    <property type="term" value="P:translation"/>
    <property type="evidence" value="ECO:0007669"/>
    <property type="project" value="UniProtKB-UniRule"/>
</dbReference>
<dbReference type="CDD" id="cd00364">
    <property type="entry name" value="Ribosomal_uS17"/>
    <property type="match status" value="1"/>
</dbReference>
<dbReference type="Gene3D" id="2.40.50.140">
    <property type="entry name" value="Nucleic acid-binding proteins"/>
    <property type="match status" value="1"/>
</dbReference>
<dbReference type="HAMAP" id="MF_01345_B">
    <property type="entry name" value="Ribosomal_uS17_B"/>
    <property type="match status" value="1"/>
</dbReference>
<dbReference type="InterPro" id="IPR012340">
    <property type="entry name" value="NA-bd_OB-fold"/>
</dbReference>
<dbReference type="InterPro" id="IPR000266">
    <property type="entry name" value="Ribosomal_uS17"/>
</dbReference>
<dbReference type="InterPro" id="IPR019984">
    <property type="entry name" value="Ribosomal_uS17_bact/chlr"/>
</dbReference>
<dbReference type="NCBIfam" id="NF004123">
    <property type="entry name" value="PRK05610.1"/>
    <property type="match status" value="1"/>
</dbReference>
<dbReference type="NCBIfam" id="TIGR03635">
    <property type="entry name" value="uS17_bact"/>
    <property type="match status" value="1"/>
</dbReference>
<dbReference type="PANTHER" id="PTHR10744">
    <property type="entry name" value="40S RIBOSOMAL PROTEIN S11 FAMILY MEMBER"/>
    <property type="match status" value="1"/>
</dbReference>
<dbReference type="PANTHER" id="PTHR10744:SF1">
    <property type="entry name" value="SMALL RIBOSOMAL SUBUNIT PROTEIN US17M"/>
    <property type="match status" value="1"/>
</dbReference>
<dbReference type="Pfam" id="PF00366">
    <property type="entry name" value="Ribosomal_S17"/>
    <property type="match status" value="1"/>
</dbReference>
<dbReference type="PRINTS" id="PR00973">
    <property type="entry name" value="RIBOSOMALS17"/>
</dbReference>
<dbReference type="SUPFAM" id="SSF50249">
    <property type="entry name" value="Nucleic acid-binding proteins"/>
    <property type="match status" value="1"/>
</dbReference>
<name>RS17_RHORT</name>
<sequence length="79" mass="9371">MPKRIMQGVVVSDKMDKTIVVQVERRFKHAVYKKFIKRTKKFAAHDELNQFKIGDLVRIRECAPISRRKTWEVVLDNAE</sequence>
<proteinExistence type="inferred from homology"/>